<proteinExistence type="inferred from homology"/>
<sequence length="132" mass="14316">MKGIRSNIPRALNAGAQIACVDNTGAKVVEIISVKKYRGVKNRMPCAGIGDMCVVSVKKGTPEMRKQILLAVVVRQKQEFRRPDGLHVSFEDNAMVITDEDGIPKGTDIKGPVAREVAERFPKIGTTASIIV</sequence>
<reference key="1">
    <citation type="journal article" date="2002" name="J. Mol. Microbiol. Biotechnol.">
        <title>The genome of Methanosarcina mazei: evidence for lateral gene transfer between Bacteria and Archaea.</title>
        <authorList>
            <person name="Deppenmeier U."/>
            <person name="Johann A."/>
            <person name="Hartsch T."/>
            <person name="Merkl R."/>
            <person name="Schmitz R.A."/>
            <person name="Martinez-Arias R."/>
            <person name="Henne A."/>
            <person name="Wiezer A."/>
            <person name="Baeumer S."/>
            <person name="Jacobi C."/>
            <person name="Brueggemann H."/>
            <person name="Lienard T."/>
            <person name="Christmann A."/>
            <person name="Boemecke M."/>
            <person name="Steckel S."/>
            <person name="Bhattacharyya A."/>
            <person name="Lykidis A."/>
            <person name="Overbeek R."/>
            <person name="Klenk H.-P."/>
            <person name="Gunsalus R.P."/>
            <person name="Fritz H.-J."/>
            <person name="Gottschalk G."/>
        </authorList>
    </citation>
    <scope>NUCLEOTIDE SEQUENCE [LARGE SCALE GENOMIC DNA]</scope>
    <source>
        <strain>ATCC BAA-159 / DSM 3647 / Goe1 / Go1 / JCM 11833 / OCM 88</strain>
    </source>
</reference>
<name>RL14_METMA</name>
<gene>
    <name evidence="1" type="primary">rpl14</name>
    <name type="ordered locus">MM_2134</name>
</gene>
<keyword id="KW-0687">Ribonucleoprotein</keyword>
<keyword id="KW-0689">Ribosomal protein</keyword>
<keyword id="KW-0694">RNA-binding</keyword>
<keyword id="KW-0699">rRNA-binding</keyword>
<dbReference type="EMBL" id="AE008384">
    <property type="protein sequence ID" value="AAM31830.1"/>
    <property type="status" value="ALT_INIT"/>
    <property type="molecule type" value="Genomic_DNA"/>
</dbReference>
<dbReference type="SMR" id="Q8PV40"/>
<dbReference type="KEGG" id="mma:MM_2134"/>
<dbReference type="PATRIC" id="fig|192952.21.peg.2448"/>
<dbReference type="eggNOG" id="arCOG04095">
    <property type="taxonomic scope" value="Archaea"/>
</dbReference>
<dbReference type="HOGENOM" id="CLU_095071_3_0_2"/>
<dbReference type="Proteomes" id="UP000000595">
    <property type="component" value="Chromosome"/>
</dbReference>
<dbReference type="GO" id="GO:0022625">
    <property type="term" value="C:cytosolic large ribosomal subunit"/>
    <property type="evidence" value="ECO:0007669"/>
    <property type="project" value="TreeGrafter"/>
</dbReference>
<dbReference type="GO" id="GO:0070180">
    <property type="term" value="F:large ribosomal subunit rRNA binding"/>
    <property type="evidence" value="ECO:0007669"/>
    <property type="project" value="TreeGrafter"/>
</dbReference>
<dbReference type="GO" id="GO:0003735">
    <property type="term" value="F:structural constituent of ribosome"/>
    <property type="evidence" value="ECO:0007669"/>
    <property type="project" value="InterPro"/>
</dbReference>
<dbReference type="GO" id="GO:0006412">
    <property type="term" value="P:translation"/>
    <property type="evidence" value="ECO:0007669"/>
    <property type="project" value="UniProtKB-UniRule"/>
</dbReference>
<dbReference type="CDD" id="cd00337">
    <property type="entry name" value="Ribosomal_uL14"/>
    <property type="match status" value="1"/>
</dbReference>
<dbReference type="FunFam" id="2.40.150.20:FF:000007">
    <property type="entry name" value="50S ribosomal protein L14"/>
    <property type="match status" value="1"/>
</dbReference>
<dbReference type="Gene3D" id="2.40.150.20">
    <property type="entry name" value="Ribosomal protein L14"/>
    <property type="match status" value="1"/>
</dbReference>
<dbReference type="HAMAP" id="MF_01367">
    <property type="entry name" value="Ribosomal_uL14"/>
    <property type="match status" value="1"/>
</dbReference>
<dbReference type="InterPro" id="IPR000218">
    <property type="entry name" value="Ribosomal_uL14"/>
</dbReference>
<dbReference type="InterPro" id="IPR019971">
    <property type="entry name" value="Ribosomal_uL14_arc"/>
</dbReference>
<dbReference type="InterPro" id="IPR019972">
    <property type="entry name" value="Ribosomal_uL14_CS"/>
</dbReference>
<dbReference type="InterPro" id="IPR036853">
    <property type="entry name" value="Ribosomal_uL14_sf"/>
</dbReference>
<dbReference type="NCBIfam" id="NF006344">
    <property type="entry name" value="PRK08571.1"/>
    <property type="match status" value="1"/>
</dbReference>
<dbReference type="NCBIfam" id="TIGR03673">
    <property type="entry name" value="uL14_arch"/>
    <property type="match status" value="1"/>
</dbReference>
<dbReference type="PANTHER" id="PTHR11761">
    <property type="entry name" value="50S/60S RIBOSOMAL PROTEIN L14/L23"/>
    <property type="match status" value="1"/>
</dbReference>
<dbReference type="PANTHER" id="PTHR11761:SF8">
    <property type="entry name" value="LARGE RIBOSOMAL SUBUNIT PROTEIN UL14"/>
    <property type="match status" value="1"/>
</dbReference>
<dbReference type="Pfam" id="PF00238">
    <property type="entry name" value="Ribosomal_L14"/>
    <property type="match status" value="1"/>
</dbReference>
<dbReference type="SMART" id="SM01374">
    <property type="entry name" value="Ribosomal_L14"/>
    <property type="match status" value="1"/>
</dbReference>
<dbReference type="SUPFAM" id="SSF50193">
    <property type="entry name" value="Ribosomal protein L14"/>
    <property type="match status" value="1"/>
</dbReference>
<dbReference type="PROSITE" id="PS00049">
    <property type="entry name" value="RIBOSOMAL_L14"/>
    <property type="match status" value="1"/>
</dbReference>
<evidence type="ECO:0000255" key="1">
    <source>
        <dbReference type="HAMAP-Rule" id="MF_01367"/>
    </source>
</evidence>
<evidence type="ECO:0000305" key="2"/>
<feature type="chain" id="PRO_0000266605" description="Large ribosomal subunit protein uL14">
    <location>
        <begin position="1"/>
        <end position="132"/>
    </location>
</feature>
<organism>
    <name type="scientific">Methanosarcina mazei (strain ATCC BAA-159 / DSM 3647 / Goe1 / Go1 / JCM 11833 / OCM 88)</name>
    <name type="common">Methanosarcina frisia</name>
    <dbReference type="NCBI Taxonomy" id="192952"/>
    <lineage>
        <taxon>Archaea</taxon>
        <taxon>Methanobacteriati</taxon>
        <taxon>Methanobacteriota</taxon>
        <taxon>Stenosarchaea group</taxon>
        <taxon>Methanomicrobia</taxon>
        <taxon>Methanosarcinales</taxon>
        <taxon>Methanosarcinaceae</taxon>
        <taxon>Methanosarcina</taxon>
    </lineage>
</organism>
<accession>Q8PV40</accession>
<comment type="function">
    <text evidence="1">Binds to 23S rRNA. Forms part of two intersubunit bridges in the 70S ribosome.</text>
</comment>
<comment type="subunit">
    <text evidence="1">Part of the 50S ribosomal subunit. Forms a cluster with proteins L3 and L24e, part of which may contact the 16S rRNA in 2 intersubunit bridges.</text>
</comment>
<comment type="similarity">
    <text evidence="1">Belongs to the universal ribosomal protein uL14 family.</text>
</comment>
<comment type="sequence caution" evidence="2">
    <conflict type="erroneous initiation">
        <sequence resource="EMBL-CDS" id="AAM31830"/>
    </conflict>
</comment>
<protein>
    <recommendedName>
        <fullName evidence="1">Large ribosomal subunit protein uL14</fullName>
    </recommendedName>
    <alternativeName>
        <fullName evidence="2">50S ribosomal protein L14</fullName>
    </alternativeName>
</protein>